<evidence type="ECO:0000250" key="1"/>
<evidence type="ECO:0000255" key="2"/>
<evidence type="ECO:0000269" key="3">
    <source>
    </source>
</evidence>
<evidence type="ECO:0000305" key="4"/>
<keyword id="KW-0035">Amyloplast</keyword>
<keyword id="KW-0150">Chloroplast</keyword>
<keyword id="KW-0472">Membrane</keyword>
<keyword id="KW-0934">Plastid</keyword>
<keyword id="KW-0653">Protein transport</keyword>
<keyword id="KW-1185">Reference proteome</keyword>
<keyword id="KW-0793">Thylakoid</keyword>
<keyword id="KW-0809">Transit peptide</keyword>
<keyword id="KW-0811">Translocation</keyword>
<keyword id="KW-0812">Transmembrane</keyword>
<keyword id="KW-1133">Transmembrane helix</keyword>
<keyword id="KW-0813">Transport</keyword>
<dbReference type="EMBL" id="AC007071">
    <property type="protein sequence ID" value="AAD24832.1"/>
    <property type="status" value="ALT_SEQ"/>
    <property type="molecule type" value="Genomic_DNA"/>
</dbReference>
<dbReference type="EMBL" id="CP002685">
    <property type="protein sequence ID" value="AEC08557.1"/>
    <property type="molecule type" value="Genomic_DNA"/>
</dbReference>
<dbReference type="EMBL" id="AY062590">
    <property type="protein sequence ID" value="AAL32668.1"/>
    <property type="status" value="ALT_SEQ"/>
    <property type="molecule type" value="mRNA"/>
</dbReference>
<dbReference type="EMBL" id="AY093354">
    <property type="protein sequence ID" value="AAM13353.1"/>
    <property type="status" value="ALT_SEQ"/>
    <property type="molecule type" value="mRNA"/>
</dbReference>
<dbReference type="EMBL" id="BX820289">
    <property type="status" value="NOT_ANNOTATED_CDS"/>
    <property type="molecule type" value="mRNA"/>
</dbReference>
<dbReference type="PIR" id="H84721">
    <property type="entry name" value="H84721"/>
</dbReference>
<dbReference type="RefSeq" id="NP_180711.4">
    <property type="nucleotide sequence ID" value="NM_128710.7"/>
</dbReference>
<dbReference type="BioGRID" id="3058">
    <property type="interactions" value="1"/>
</dbReference>
<dbReference type="FunCoup" id="F4IQV7">
    <property type="interactions" value="1043"/>
</dbReference>
<dbReference type="STRING" id="3702.F4IQV7"/>
<dbReference type="TCDB" id="3.A.5.4.2">
    <property type="family name" value="the general secretory pathway (sec) family"/>
</dbReference>
<dbReference type="PaxDb" id="3702-AT2G31530.1"/>
<dbReference type="ProteomicsDB" id="232775"/>
<dbReference type="EnsemblPlants" id="AT2G31530.1">
    <property type="protein sequence ID" value="AT2G31530.1"/>
    <property type="gene ID" value="AT2G31530"/>
</dbReference>
<dbReference type="GeneID" id="817711"/>
<dbReference type="Gramene" id="AT2G31530.1">
    <property type="protein sequence ID" value="AT2G31530.1"/>
    <property type="gene ID" value="AT2G31530"/>
</dbReference>
<dbReference type="KEGG" id="ath:AT2G31530"/>
<dbReference type="Araport" id="AT2G31530"/>
<dbReference type="TAIR" id="AT2G31530">
    <property type="gene designation" value="SCY2"/>
</dbReference>
<dbReference type="eggNOG" id="ENOG502QPS8">
    <property type="taxonomic scope" value="Eukaryota"/>
</dbReference>
<dbReference type="HOGENOM" id="CLU_030313_3_2_1"/>
<dbReference type="InParanoid" id="F4IQV7"/>
<dbReference type="OMA" id="TIVTMWA"/>
<dbReference type="PRO" id="PR:F4IQV7"/>
<dbReference type="Proteomes" id="UP000006548">
    <property type="component" value="Chromosome 2"/>
</dbReference>
<dbReference type="ExpressionAtlas" id="F4IQV7">
    <property type="expression patterns" value="baseline and differential"/>
</dbReference>
<dbReference type="GO" id="GO:0033097">
    <property type="term" value="C:amyloplast membrane"/>
    <property type="evidence" value="ECO:0007669"/>
    <property type="project" value="UniProtKB-SubCell"/>
</dbReference>
<dbReference type="GO" id="GO:0031969">
    <property type="term" value="C:chloroplast membrane"/>
    <property type="evidence" value="ECO:0007669"/>
    <property type="project" value="UniProtKB-SubCell"/>
</dbReference>
<dbReference type="GO" id="GO:0009535">
    <property type="term" value="C:chloroplast thylakoid membrane"/>
    <property type="evidence" value="ECO:0007669"/>
    <property type="project" value="UniProtKB-SubCell"/>
</dbReference>
<dbReference type="GO" id="GO:0009526">
    <property type="term" value="C:plastid envelope"/>
    <property type="evidence" value="ECO:0000314"/>
    <property type="project" value="TAIR"/>
</dbReference>
<dbReference type="GO" id="GO:0009658">
    <property type="term" value="P:chloroplast organization"/>
    <property type="evidence" value="ECO:0000315"/>
    <property type="project" value="TAIR"/>
</dbReference>
<dbReference type="GO" id="GO:0072598">
    <property type="term" value="P:protein localization to chloroplast"/>
    <property type="evidence" value="ECO:0000315"/>
    <property type="project" value="TAIR"/>
</dbReference>
<dbReference type="GO" id="GO:0015031">
    <property type="term" value="P:protein transport"/>
    <property type="evidence" value="ECO:0007669"/>
    <property type="project" value="UniProtKB-KW"/>
</dbReference>
<dbReference type="GO" id="GO:0010027">
    <property type="term" value="P:thylakoid membrane organization"/>
    <property type="evidence" value="ECO:0000315"/>
    <property type="project" value="TAIR"/>
</dbReference>
<dbReference type="FunFam" id="1.10.3370.10:FF:000008">
    <property type="entry name" value="Preprotein translocase subunit SCY2, chloroplastic"/>
    <property type="match status" value="1"/>
</dbReference>
<dbReference type="Gene3D" id="1.10.3370.10">
    <property type="entry name" value="SecY subunit domain"/>
    <property type="match status" value="1"/>
</dbReference>
<dbReference type="InterPro" id="IPR002208">
    <property type="entry name" value="SecY/SEC61-alpha"/>
</dbReference>
<dbReference type="InterPro" id="IPR023201">
    <property type="entry name" value="SecY_dom_sf"/>
</dbReference>
<dbReference type="PANTHER" id="PTHR10906">
    <property type="entry name" value="SECY/SEC61-ALPHA FAMILY MEMBER"/>
    <property type="match status" value="1"/>
</dbReference>
<dbReference type="Pfam" id="PF00344">
    <property type="entry name" value="SecY"/>
    <property type="match status" value="1"/>
</dbReference>
<dbReference type="PRINTS" id="PR00303">
    <property type="entry name" value="SECYTRNLCASE"/>
</dbReference>
<dbReference type="SUPFAM" id="SSF103491">
    <property type="entry name" value="Preprotein translocase SecY subunit"/>
    <property type="match status" value="1"/>
</dbReference>
<comment type="function">
    <text evidence="1 3">Involved in protein export. Probably interacts with other proteins to allow the postimport or conservative sorting pathway for inner membrane proteins in plastids. Central subunit of the protein translocation channel SecYE. Consists of two halves formed by TMs 1-5 and 6-10. These two domains form a lateral gate at the front which open onto the bilayer between TMs 2 and 7, and are clamped together by SecE at the back. The channel is closed by both a pore ring composed of hydrophobic SecY resides and a short helix (helix 2A) on the extracellular side of the membrane which forms a plug (By similarity).</text>
</comment>
<comment type="subunit">
    <text>Part of a second Sec protein translocation apparatus. Interacts probably with SECA2.</text>
</comment>
<comment type="subcellular location">
    <subcellularLocation>
        <location evidence="3">Plastid</location>
        <location evidence="3">Chloroplast membrane</location>
        <topology evidence="3">Multi-pass membrane protein</topology>
    </subcellularLocation>
    <subcellularLocation>
        <location evidence="3">Plastid</location>
        <location evidence="3">Amyloplast membrane</location>
        <topology evidence="3">Multi-pass membrane protein</topology>
    </subcellularLocation>
    <subcellularLocation>
        <location evidence="3">Plastid</location>
        <location evidence="3">Chloroplast thylakoid membrane</location>
        <topology evidence="3">Multi-pass membrane protein</topology>
    </subcellularLocation>
    <text>Predominantly localized to envelope membranes.</text>
</comment>
<comment type="tissue specificity">
    <text evidence="3">Ubiquitous.</text>
</comment>
<comment type="disruption phenotype">
    <text evidence="3">Embryo lethal.</text>
</comment>
<comment type="miscellaneous">
    <text>Cannot substitute for SCY1.</text>
</comment>
<comment type="similarity">
    <text evidence="4">Belongs to the SecY/SEC61-alpha family.</text>
</comment>
<comment type="sequence caution" evidence="4">
    <conflict type="erroneous gene model prediction">
        <sequence resource="EMBL-CDS" id="AAD24832"/>
    </conflict>
</comment>
<comment type="sequence caution" evidence="4">
    <conflict type="miscellaneous discrepancy">
        <sequence resource="EMBL-CDS" id="AAL32668"/>
    </conflict>
    <text>Intron retention and frameshift at position 388.</text>
</comment>
<comment type="sequence caution" evidence="4">
    <conflict type="miscellaneous discrepancy">
        <sequence resource="EMBL-CDS" id="AAM13353"/>
    </conflict>
    <text>Intron retention.</text>
</comment>
<comment type="sequence caution" evidence="4">
    <conflict type="frameshift">
        <sequence resource="EMBL" id="BX820289"/>
    </conflict>
</comment>
<reference key="1">
    <citation type="journal article" date="1999" name="Nature">
        <title>Sequence and analysis of chromosome 2 of the plant Arabidopsis thaliana.</title>
        <authorList>
            <person name="Lin X."/>
            <person name="Kaul S."/>
            <person name="Rounsley S.D."/>
            <person name="Shea T.P."/>
            <person name="Benito M.-I."/>
            <person name="Town C.D."/>
            <person name="Fujii C.Y."/>
            <person name="Mason T.M."/>
            <person name="Bowman C.L."/>
            <person name="Barnstead M.E."/>
            <person name="Feldblyum T.V."/>
            <person name="Buell C.R."/>
            <person name="Ketchum K.A."/>
            <person name="Lee J.J."/>
            <person name="Ronning C.M."/>
            <person name="Koo H.L."/>
            <person name="Moffat K.S."/>
            <person name="Cronin L.A."/>
            <person name="Shen M."/>
            <person name="Pai G."/>
            <person name="Van Aken S."/>
            <person name="Umayam L."/>
            <person name="Tallon L.J."/>
            <person name="Gill J.E."/>
            <person name="Adams M.D."/>
            <person name="Carrera A.J."/>
            <person name="Creasy T.H."/>
            <person name="Goodman H.M."/>
            <person name="Somerville C.R."/>
            <person name="Copenhaver G.P."/>
            <person name="Preuss D."/>
            <person name="Nierman W.C."/>
            <person name="White O."/>
            <person name="Eisen J.A."/>
            <person name="Salzberg S.L."/>
            <person name="Fraser C.M."/>
            <person name="Venter J.C."/>
        </authorList>
    </citation>
    <scope>NUCLEOTIDE SEQUENCE [LARGE SCALE GENOMIC DNA]</scope>
    <source>
        <strain>cv. Columbia</strain>
    </source>
</reference>
<reference key="2">
    <citation type="journal article" date="2017" name="Plant J.">
        <title>Araport11: a complete reannotation of the Arabidopsis thaliana reference genome.</title>
        <authorList>
            <person name="Cheng C.Y."/>
            <person name="Krishnakumar V."/>
            <person name="Chan A.P."/>
            <person name="Thibaud-Nissen F."/>
            <person name="Schobel S."/>
            <person name="Town C.D."/>
        </authorList>
    </citation>
    <scope>GENOME REANNOTATION</scope>
    <source>
        <strain>cv. Columbia</strain>
    </source>
</reference>
<reference key="3">
    <citation type="journal article" date="2003" name="Science">
        <title>Empirical analysis of transcriptional activity in the Arabidopsis genome.</title>
        <authorList>
            <person name="Yamada K."/>
            <person name="Lim J."/>
            <person name="Dale J.M."/>
            <person name="Chen H."/>
            <person name="Shinn P."/>
            <person name="Palm C.J."/>
            <person name="Southwick A.M."/>
            <person name="Wu H.C."/>
            <person name="Kim C.J."/>
            <person name="Nguyen M."/>
            <person name="Pham P.K."/>
            <person name="Cheuk R.F."/>
            <person name="Karlin-Newmann G."/>
            <person name="Liu S.X."/>
            <person name="Lam B."/>
            <person name="Sakano H."/>
            <person name="Wu T."/>
            <person name="Yu G."/>
            <person name="Miranda M."/>
            <person name="Quach H.L."/>
            <person name="Tripp M."/>
            <person name="Chang C.H."/>
            <person name="Lee J.M."/>
            <person name="Toriumi M.J."/>
            <person name="Chan M.M."/>
            <person name="Tang C.C."/>
            <person name="Onodera C.S."/>
            <person name="Deng J.M."/>
            <person name="Akiyama K."/>
            <person name="Ansari Y."/>
            <person name="Arakawa T."/>
            <person name="Banh J."/>
            <person name="Banno F."/>
            <person name="Bowser L."/>
            <person name="Brooks S.Y."/>
            <person name="Carninci P."/>
            <person name="Chao Q."/>
            <person name="Choy N."/>
            <person name="Enju A."/>
            <person name="Goldsmith A.D."/>
            <person name="Gurjal M."/>
            <person name="Hansen N.F."/>
            <person name="Hayashizaki Y."/>
            <person name="Johnson-Hopson C."/>
            <person name="Hsuan V.W."/>
            <person name="Iida K."/>
            <person name="Karnes M."/>
            <person name="Khan S."/>
            <person name="Koesema E."/>
            <person name="Ishida J."/>
            <person name="Jiang P.X."/>
            <person name="Jones T."/>
            <person name="Kawai J."/>
            <person name="Kamiya A."/>
            <person name="Meyers C."/>
            <person name="Nakajima M."/>
            <person name="Narusaka M."/>
            <person name="Seki M."/>
            <person name="Sakurai T."/>
            <person name="Satou M."/>
            <person name="Tamse R."/>
            <person name="Vaysberg M."/>
            <person name="Wallender E.K."/>
            <person name="Wong C."/>
            <person name="Yamamura Y."/>
            <person name="Yuan S."/>
            <person name="Shinozaki K."/>
            <person name="Davis R.W."/>
            <person name="Theologis A."/>
            <person name="Ecker J.R."/>
        </authorList>
    </citation>
    <scope>NUCLEOTIDE SEQUENCE [LARGE SCALE MRNA]</scope>
    <source>
        <strain>cv. Columbia</strain>
    </source>
</reference>
<reference key="4">
    <citation type="journal article" date="2004" name="Genome Res.">
        <title>Whole genome sequence comparisons and 'full-length' cDNA sequences: a combined approach to evaluate and improve Arabidopsis genome annotation.</title>
        <authorList>
            <person name="Castelli V."/>
            <person name="Aury J.-M."/>
            <person name="Jaillon O."/>
            <person name="Wincker P."/>
            <person name="Clepet C."/>
            <person name="Menard M."/>
            <person name="Cruaud C."/>
            <person name="Quetier F."/>
            <person name="Scarpelli C."/>
            <person name="Schaechter V."/>
            <person name="Temple G."/>
            <person name="Caboche M."/>
            <person name="Weissenbach J."/>
            <person name="Salanoubat M."/>
        </authorList>
    </citation>
    <scope>NUCLEOTIDE SEQUENCE [LARGE SCALE MRNA] OF 17-575</scope>
    <source>
        <strain>cv. Columbia</strain>
    </source>
</reference>
<reference key="5">
    <citation type="journal article" date="2011" name="Plant Physiol.">
        <title>Plastids contain a second sec translocase system with essential functions.</title>
        <authorList>
            <person name="Skalitzky C.A."/>
            <person name="Martin J.R."/>
            <person name="Harwood J.H."/>
            <person name="Beirne J.J."/>
            <person name="Adamczyk B.J."/>
            <person name="Heck G.R."/>
            <person name="Cline K."/>
            <person name="Fernandez D.E."/>
        </authorList>
    </citation>
    <scope>FUNCTION</scope>
    <scope>SUBCELLULAR LOCATION</scope>
    <scope>TISSUE SPECIFICITY</scope>
    <scope>DISRUPTION PHENOTYPE</scope>
</reference>
<sequence length="575" mass="64711">MNSSQACFFHFSLRPISLSHPSYAFLSKRDPFLCSQPRKCLTTNLNMSRTRQGHSIQMNRRHLLMKERKSFSINYSDKFRDDSMSSEEMHTDALDVEIIPPDSQDIRNSQNSAVSNTLQDDRPKSFRNRFLDFVRISSVLNTAAERFFKSEIRRRLFVTAVLLVLSRVGYFIPLPGFDRRLIPQDYLSFVSGSVEELGEFGAEIKLSLFQLGLSPQIIASIIMQVLCHVLPSLVKLRKEGLDGHEKIKSYIWWLSFFFAIVEALVVAYTSLQYSVFAATAQVKHVMMTSSLLVCGAMTMTWLCDTISESGFGHGSSLIICVGILTGYTETLHKMLNQISGSFSNWLPYLLGLLGIFTVVTMFAVVVTEGCRKIKLQYYGFKLASASREGSPITEVEPYIPFNINPAGMQPVLTTTYLLAFPSILASILGSPFLLNMKEILNPESTVGAPPWVYYSIYAFFVFLFNIFDIANLPKEIADYLNKMGARIPNIKPGKATIEYLTKIQASTRFWGGLLLSFLATASTVLDHYLRSINQGFSIGFTSVLIIVGSIIELRRSYHAYNVMPSLSKALKRYGV</sequence>
<gene>
    <name type="primary">SCY2</name>
    <name type="synonym">EMB2289</name>
    <name type="ordered locus">At2g31530</name>
    <name type="ORF">T9H9.5</name>
</gene>
<accession>F4IQV7</accession>
<accession>Q8W4F6</accession>
<accession>Q9SIQ4</accession>
<organism>
    <name type="scientific">Arabidopsis thaliana</name>
    <name type="common">Mouse-ear cress</name>
    <dbReference type="NCBI Taxonomy" id="3702"/>
    <lineage>
        <taxon>Eukaryota</taxon>
        <taxon>Viridiplantae</taxon>
        <taxon>Streptophyta</taxon>
        <taxon>Embryophyta</taxon>
        <taxon>Tracheophyta</taxon>
        <taxon>Spermatophyta</taxon>
        <taxon>Magnoliopsida</taxon>
        <taxon>eudicotyledons</taxon>
        <taxon>Gunneridae</taxon>
        <taxon>Pentapetalae</taxon>
        <taxon>rosids</taxon>
        <taxon>malvids</taxon>
        <taxon>Brassicales</taxon>
        <taxon>Brassicaceae</taxon>
        <taxon>Camelineae</taxon>
        <taxon>Arabidopsis</taxon>
    </lineage>
</organism>
<name>SCY2_ARATH</name>
<feature type="transit peptide" description="Chloroplast" evidence="2">
    <location>
        <begin position="1"/>
        <end position="34"/>
    </location>
</feature>
<feature type="chain" id="PRO_0000414227" description="Preprotein translocase subunit SCY2, chloroplastic">
    <location>
        <begin position="35"/>
        <end position="575"/>
    </location>
</feature>
<feature type="transmembrane region" description="Helical" evidence="2">
    <location>
        <begin position="157"/>
        <end position="177"/>
    </location>
</feature>
<feature type="transmembrane region" description="Helical" evidence="2">
    <location>
        <begin position="206"/>
        <end position="226"/>
    </location>
</feature>
<feature type="transmembrane region" description="Helical" evidence="2">
    <location>
        <begin position="251"/>
        <end position="271"/>
    </location>
</feature>
<feature type="transmembrane region" description="Helical" evidence="2">
    <location>
        <begin position="285"/>
        <end position="305"/>
    </location>
</feature>
<feature type="transmembrane region" description="Helical" evidence="2">
    <location>
        <begin position="306"/>
        <end position="326"/>
    </location>
</feature>
<feature type="transmembrane region" description="Helical" evidence="2">
    <location>
        <begin position="346"/>
        <end position="366"/>
    </location>
</feature>
<feature type="transmembrane region" description="Helical" evidence="2">
    <location>
        <begin position="414"/>
        <end position="434"/>
    </location>
</feature>
<feature type="transmembrane region" description="Helical" evidence="2">
    <location>
        <begin position="447"/>
        <end position="467"/>
    </location>
</feature>
<feature type="transmembrane region" description="Helical" evidence="2">
    <location>
        <begin position="509"/>
        <end position="529"/>
    </location>
</feature>
<feature type="transmembrane region" description="Helical" evidence="2">
    <location>
        <begin position="531"/>
        <end position="551"/>
    </location>
</feature>
<feature type="sequence conflict" description="In Ref. 4; BX820289." evidence="4" ref="4">
    <original>F</original>
    <variation>L</variation>
    <location>
        <position position="380"/>
    </location>
</feature>
<proteinExistence type="evidence at transcript level"/>
<protein>
    <recommendedName>
        <fullName>Preprotein translocase subunit SCY2, chloroplastic</fullName>
    </recommendedName>
    <alternativeName>
        <fullName>Protein EMBRYO DEFECTIVE 2289</fullName>
    </alternativeName>
</protein>